<gene>
    <name evidence="1" type="primary">tsaD</name>
    <name type="synonym">gcp</name>
    <name type="ordered locus">Mchl_0746</name>
</gene>
<accession>B7KZD5</accession>
<feature type="chain" id="PRO_1000184969" description="tRNA N6-adenosine threonylcarbamoyltransferase">
    <location>
        <begin position="1"/>
        <end position="347"/>
    </location>
</feature>
<feature type="binding site" evidence="1">
    <location>
        <position position="115"/>
    </location>
    <ligand>
        <name>Fe cation</name>
        <dbReference type="ChEBI" id="CHEBI:24875"/>
    </ligand>
</feature>
<feature type="binding site" evidence="1">
    <location>
        <position position="119"/>
    </location>
    <ligand>
        <name>Fe cation</name>
        <dbReference type="ChEBI" id="CHEBI:24875"/>
    </ligand>
</feature>
<feature type="binding site" evidence="1">
    <location>
        <begin position="137"/>
        <end position="141"/>
    </location>
    <ligand>
        <name>substrate</name>
    </ligand>
</feature>
<feature type="binding site" evidence="1">
    <location>
        <position position="170"/>
    </location>
    <ligand>
        <name>substrate</name>
    </ligand>
</feature>
<feature type="binding site" evidence="1">
    <location>
        <position position="183"/>
    </location>
    <ligand>
        <name>substrate</name>
    </ligand>
</feature>
<feature type="binding site" evidence="1">
    <location>
        <position position="281"/>
    </location>
    <ligand>
        <name>substrate</name>
    </ligand>
</feature>
<feature type="binding site" evidence="1">
    <location>
        <position position="309"/>
    </location>
    <ligand>
        <name>Fe cation</name>
        <dbReference type="ChEBI" id="CHEBI:24875"/>
    </ligand>
</feature>
<protein>
    <recommendedName>
        <fullName evidence="1">tRNA N6-adenosine threonylcarbamoyltransferase</fullName>
        <ecNumber evidence="1">2.3.1.234</ecNumber>
    </recommendedName>
    <alternativeName>
        <fullName evidence="1">N6-L-threonylcarbamoyladenine synthase</fullName>
        <shortName evidence="1">t(6)A synthase</shortName>
    </alternativeName>
    <alternativeName>
        <fullName evidence="1">t(6)A37 threonylcarbamoyladenosine biosynthesis protein TsaD</fullName>
    </alternativeName>
    <alternativeName>
        <fullName evidence="1">tRNA threonylcarbamoyladenosine biosynthesis protein TsaD</fullName>
    </alternativeName>
</protein>
<proteinExistence type="inferred from homology"/>
<name>TSAD_METC4</name>
<organism>
    <name type="scientific">Methylorubrum extorquens (strain CM4 / NCIMB 13688)</name>
    <name type="common">Methylobacterium extorquens</name>
    <dbReference type="NCBI Taxonomy" id="440085"/>
    <lineage>
        <taxon>Bacteria</taxon>
        <taxon>Pseudomonadati</taxon>
        <taxon>Pseudomonadota</taxon>
        <taxon>Alphaproteobacteria</taxon>
        <taxon>Hyphomicrobiales</taxon>
        <taxon>Methylobacteriaceae</taxon>
        <taxon>Methylorubrum</taxon>
    </lineage>
</organism>
<reference key="1">
    <citation type="submission" date="2008-12" db="EMBL/GenBank/DDBJ databases">
        <title>Complete sequence of chromosome of Methylobacterium chloromethanicum CM4.</title>
        <authorList>
            <consortium name="US DOE Joint Genome Institute"/>
            <person name="Lucas S."/>
            <person name="Copeland A."/>
            <person name="Lapidus A."/>
            <person name="Glavina del Rio T."/>
            <person name="Dalin E."/>
            <person name="Tice H."/>
            <person name="Bruce D."/>
            <person name="Goodwin L."/>
            <person name="Pitluck S."/>
            <person name="Chertkov O."/>
            <person name="Brettin T."/>
            <person name="Detter J.C."/>
            <person name="Han C."/>
            <person name="Larimer F."/>
            <person name="Land M."/>
            <person name="Hauser L."/>
            <person name="Kyrpides N."/>
            <person name="Mikhailova N."/>
            <person name="Marx C."/>
            <person name="Richardson P."/>
        </authorList>
    </citation>
    <scope>NUCLEOTIDE SEQUENCE [LARGE SCALE GENOMIC DNA]</scope>
    <source>
        <strain>CM4 / NCIMB 13688</strain>
    </source>
</reference>
<dbReference type="EC" id="2.3.1.234" evidence="1"/>
<dbReference type="EMBL" id="CP001298">
    <property type="protein sequence ID" value="ACK81665.1"/>
    <property type="molecule type" value="Genomic_DNA"/>
</dbReference>
<dbReference type="RefSeq" id="WP_012252470.1">
    <property type="nucleotide sequence ID" value="NC_011757.1"/>
</dbReference>
<dbReference type="SMR" id="B7KZD5"/>
<dbReference type="GeneID" id="72988107"/>
<dbReference type="KEGG" id="mch:Mchl_0746"/>
<dbReference type="HOGENOM" id="CLU_023208_0_2_5"/>
<dbReference type="Proteomes" id="UP000002385">
    <property type="component" value="Chromosome"/>
</dbReference>
<dbReference type="GO" id="GO:0005737">
    <property type="term" value="C:cytoplasm"/>
    <property type="evidence" value="ECO:0007669"/>
    <property type="project" value="UniProtKB-SubCell"/>
</dbReference>
<dbReference type="GO" id="GO:0005506">
    <property type="term" value="F:iron ion binding"/>
    <property type="evidence" value="ECO:0007669"/>
    <property type="project" value="UniProtKB-UniRule"/>
</dbReference>
<dbReference type="GO" id="GO:0061711">
    <property type="term" value="F:N(6)-L-threonylcarbamoyladenine synthase activity"/>
    <property type="evidence" value="ECO:0007669"/>
    <property type="project" value="UniProtKB-EC"/>
</dbReference>
<dbReference type="GO" id="GO:0002949">
    <property type="term" value="P:tRNA threonylcarbamoyladenosine modification"/>
    <property type="evidence" value="ECO:0007669"/>
    <property type="project" value="UniProtKB-UniRule"/>
</dbReference>
<dbReference type="FunFam" id="3.30.420.40:FF:000040">
    <property type="entry name" value="tRNA N6-adenosine threonylcarbamoyltransferase"/>
    <property type="match status" value="1"/>
</dbReference>
<dbReference type="Gene3D" id="3.30.420.40">
    <property type="match status" value="2"/>
</dbReference>
<dbReference type="HAMAP" id="MF_01445">
    <property type="entry name" value="TsaD"/>
    <property type="match status" value="1"/>
</dbReference>
<dbReference type="InterPro" id="IPR043129">
    <property type="entry name" value="ATPase_NBD"/>
</dbReference>
<dbReference type="InterPro" id="IPR000905">
    <property type="entry name" value="Gcp-like_dom"/>
</dbReference>
<dbReference type="InterPro" id="IPR017861">
    <property type="entry name" value="KAE1/TsaD"/>
</dbReference>
<dbReference type="InterPro" id="IPR022450">
    <property type="entry name" value="TsaD"/>
</dbReference>
<dbReference type="NCBIfam" id="TIGR00329">
    <property type="entry name" value="gcp_kae1"/>
    <property type="match status" value="1"/>
</dbReference>
<dbReference type="NCBIfam" id="TIGR03723">
    <property type="entry name" value="T6A_TsaD_YgjD"/>
    <property type="match status" value="1"/>
</dbReference>
<dbReference type="PANTHER" id="PTHR11735">
    <property type="entry name" value="TRNA N6-ADENOSINE THREONYLCARBAMOYLTRANSFERASE"/>
    <property type="match status" value="1"/>
</dbReference>
<dbReference type="PANTHER" id="PTHR11735:SF6">
    <property type="entry name" value="TRNA N6-ADENOSINE THREONYLCARBAMOYLTRANSFERASE, MITOCHONDRIAL"/>
    <property type="match status" value="1"/>
</dbReference>
<dbReference type="Pfam" id="PF00814">
    <property type="entry name" value="TsaD"/>
    <property type="match status" value="1"/>
</dbReference>
<dbReference type="PRINTS" id="PR00789">
    <property type="entry name" value="OSIALOPTASE"/>
</dbReference>
<dbReference type="SUPFAM" id="SSF53067">
    <property type="entry name" value="Actin-like ATPase domain"/>
    <property type="match status" value="2"/>
</dbReference>
<evidence type="ECO:0000255" key="1">
    <source>
        <dbReference type="HAMAP-Rule" id="MF_01445"/>
    </source>
</evidence>
<comment type="function">
    <text evidence="1">Required for the formation of a threonylcarbamoyl group on adenosine at position 37 (t(6)A37) in tRNAs that read codons beginning with adenine. Is involved in the transfer of the threonylcarbamoyl moiety of threonylcarbamoyl-AMP (TC-AMP) to the N6 group of A37, together with TsaE and TsaB. TsaD likely plays a direct catalytic role in this reaction.</text>
</comment>
<comment type="catalytic activity">
    <reaction evidence="1">
        <text>L-threonylcarbamoyladenylate + adenosine(37) in tRNA = N(6)-L-threonylcarbamoyladenosine(37) in tRNA + AMP + H(+)</text>
        <dbReference type="Rhea" id="RHEA:37059"/>
        <dbReference type="Rhea" id="RHEA-COMP:10162"/>
        <dbReference type="Rhea" id="RHEA-COMP:10163"/>
        <dbReference type="ChEBI" id="CHEBI:15378"/>
        <dbReference type="ChEBI" id="CHEBI:73682"/>
        <dbReference type="ChEBI" id="CHEBI:74411"/>
        <dbReference type="ChEBI" id="CHEBI:74418"/>
        <dbReference type="ChEBI" id="CHEBI:456215"/>
        <dbReference type="EC" id="2.3.1.234"/>
    </reaction>
</comment>
<comment type="cofactor">
    <cofactor evidence="1">
        <name>Fe(2+)</name>
        <dbReference type="ChEBI" id="CHEBI:29033"/>
    </cofactor>
    <text evidence="1">Binds 1 Fe(2+) ion per subunit.</text>
</comment>
<comment type="subcellular location">
    <subcellularLocation>
        <location evidence="1">Cytoplasm</location>
    </subcellularLocation>
</comment>
<comment type="similarity">
    <text evidence="1">Belongs to the KAE1 / TsaD family.</text>
</comment>
<sequence length="347" mass="35879">MKILGIETTCDETAAAVVTLGEDERGQILANEVLSQIAEHAAYGGVVPEIAARAHVEVLDRLIARALQRAGTTLKEIDGIAVAAGPGLIGGVLIGLVTAKTLALVARKPLLAVNHLEAHALTPRLTDGLAFPYLLLLASGGHTQLVAVKGVGDYVRLGTTIDDAIGEAFDKVAKLLGLGYPGGPEVERQAESGNPERFALPRPMIGRRQADFSLSGLKTALRIEAERLEPLASQDVADLCASFQAAVVDVVVDRVRVALRAFAGVAGHPTALVAAGGVAANGAIRRALAAQAGEVGLSFVAPPLPLCGDNGAMIAWAGLERLRLGLVDDLTVPARARWPFAEVAPAA</sequence>
<keyword id="KW-0012">Acyltransferase</keyword>
<keyword id="KW-0963">Cytoplasm</keyword>
<keyword id="KW-0408">Iron</keyword>
<keyword id="KW-0479">Metal-binding</keyword>
<keyword id="KW-0808">Transferase</keyword>
<keyword id="KW-0819">tRNA processing</keyword>